<comment type="function">
    <text evidence="1">Facilitates nuclear export of spliced mRNA by releasing the RNA from the spliceosome.</text>
</comment>
<comment type="catalytic activity">
    <reaction>
        <text>ATP + H2O = ADP + phosphate + H(+)</text>
        <dbReference type="Rhea" id="RHEA:13065"/>
        <dbReference type="ChEBI" id="CHEBI:15377"/>
        <dbReference type="ChEBI" id="CHEBI:15378"/>
        <dbReference type="ChEBI" id="CHEBI:30616"/>
        <dbReference type="ChEBI" id="CHEBI:43474"/>
        <dbReference type="ChEBI" id="CHEBI:456216"/>
        <dbReference type="EC" id="3.6.4.13"/>
    </reaction>
</comment>
<comment type="subunit">
    <text evidence="1">Identified in the spliceosome complex.</text>
</comment>
<comment type="subcellular location">
    <subcellularLocation>
        <location evidence="1">Nucleus</location>
    </subcellularLocation>
</comment>
<comment type="similarity">
    <text evidence="6">Belongs to the DEAD box helicase family. DEAH subfamily. DDX8/PRP22 sub-subfamily.</text>
</comment>
<name>DHX8_DICDI</name>
<keyword id="KW-0067">ATP-binding</keyword>
<keyword id="KW-0347">Helicase</keyword>
<keyword id="KW-0378">Hydrolase</keyword>
<keyword id="KW-0507">mRNA processing</keyword>
<keyword id="KW-0508">mRNA splicing</keyword>
<keyword id="KW-0547">Nucleotide-binding</keyword>
<keyword id="KW-0539">Nucleus</keyword>
<keyword id="KW-1185">Reference proteome</keyword>
<keyword id="KW-0747">Spliceosome</keyword>
<protein>
    <recommendedName>
        <fullName>ATP-dependent RNA helicase dhx8</fullName>
        <ecNumber>3.6.4.13</ecNumber>
    </recommendedName>
    <alternativeName>
        <fullName>DEAH box protein 8</fullName>
    </alternativeName>
</protein>
<gene>
    <name type="primary">dhx8</name>
    <name type="synonym">prp22</name>
    <name type="ORF">DDB_G0291183</name>
</gene>
<organism>
    <name type="scientific">Dictyostelium discoideum</name>
    <name type="common">Social amoeba</name>
    <dbReference type="NCBI Taxonomy" id="44689"/>
    <lineage>
        <taxon>Eukaryota</taxon>
        <taxon>Amoebozoa</taxon>
        <taxon>Evosea</taxon>
        <taxon>Eumycetozoa</taxon>
        <taxon>Dictyostelia</taxon>
        <taxon>Dictyosteliales</taxon>
        <taxon>Dictyosteliaceae</taxon>
        <taxon>Dictyostelium</taxon>
    </lineage>
</organism>
<accession>Q54F05</accession>
<dbReference type="EC" id="3.6.4.13"/>
<dbReference type="EMBL" id="AAFI02000175">
    <property type="protein sequence ID" value="EAL61875.1"/>
    <property type="molecule type" value="Genomic_DNA"/>
</dbReference>
<dbReference type="RefSeq" id="XP_635385.1">
    <property type="nucleotide sequence ID" value="XM_630293.1"/>
</dbReference>
<dbReference type="SMR" id="Q54F05"/>
<dbReference type="FunCoup" id="Q54F05">
    <property type="interactions" value="574"/>
</dbReference>
<dbReference type="STRING" id="44689.Q54F05"/>
<dbReference type="PaxDb" id="44689-DDB0233399"/>
<dbReference type="EnsemblProtists" id="EAL61875">
    <property type="protein sequence ID" value="EAL61875"/>
    <property type="gene ID" value="DDB_G0291183"/>
</dbReference>
<dbReference type="GeneID" id="8628033"/>
<dbReference type="KEGG" id="ddi:DDB_G0291183"/>
<dbReference type="dictyBase" id="DDB_G0291183">
    <property type="gene designation" value="dhx8"/>
</dbReference>
<dbReference type="VEuPathDB" id="AmoebaDB:DDB_G0291183"/>
<dbReference type="eggNOG" id="KOG0922">
    <property type="taxonomic scope" value="Eukaryota"/>
</dbReference>
<dbReference type="HOGENOM" id="CLU_001832_2_2_1"/>
<dbReference type="InParanoid" id="Q54F05"/>
<dbReference type="OMA" id="MKEVDQV"/>
<dbReference type="PhylomeDB" id="Q54F05"/>
<dbReference type="Reactome" id="R-DDI-72163">
    <property type="pathway name" value="mRNA Splicing - Major Pathway"/>
</dbReference>
<dbReference type="PRO" id="PR:Q54F05"/>
<dbReference type="Proteomes" id="UP000002195">
    <property type="component" value="Chromosome 5"/>
</dbReference>
<dbReference type="GO" id="GO:0071013">
    <property type="term" value="C:catalytic step 2 spliceosome"/>
    <property type="evidence" value="ECO:0000318"/>
    <property type="project" value="GO_Central"/>
</dbReference>
<dbReference type="GO" id="GO:0005681">
    <property type="term" value="C:spliceosomal complex"/>
    <property type="evidence" value="ECO:0000250"/>
    <property type="project" value="dictyBase"/>
</dbReference>
<dbReference type="GO" id="GO:0005524">
    <property type="term" value="F:ATP binding"/>
    <property type="evidence" value="ECO:0007669"/>
    <property type="project" value="UniProtKB-KW"/>
</dbReference>
<dbReference type="GO" id="GO:0016887">
    <property type="term" value="F:ATP hydrolysis activity"/>
    <property type="evidence" value="ECO:0007669"/>
    <property type="project" value="RHEA"/>
</dbReference>
<dbReference type="GO" id="GO:0003723">
    <property type="term" value="F:RNA binding"/>
    <property type="evidence" value="ECO:0000318"/>
    <property type="project" value="GO_Central"/>
</dbReference>
<dbReference type="GO" id="GO:0003724">
    <property type="term" value="F:RNA helicase activity"/>
    <property type="evidence" value="ECO:0000318"/>
    <property type="project" value="GO_Central"/>
</dbReference>
<dbReference type="GO" id="GO:0000398">
    <property type="term" value="P:mRNA splicing, via spliceosome"/>
    <property type="evidence" value="ECO:0000318"/>
    <property type="project" value="GO_Central"/>
</dbReference>
<dbReference type="CDD" id="cd17971">
    <property type="entry name" value="DEXHc_DHX8"/>
    <property type="match status" value="1"/>
</dbReference>
<dbReference type="CDD" id="cd05684">
    <property type="entry name" value="S1_DHX8_helicase"/>
    <property type="match status" value="1"/>
</dbReference>
<dbReference type="CDD" id="cd18791">
    <property type="entry name" value="SF2_C_RHA"/>
    <property type="match status" value="1"/>
</dbReference>
<dbReference type="FunFam" id="2.40.50.140:FF:000061">
    <property type="entry name" value="ATP-dependent RNA helicase DHX8"/>
    <property type="match status" value="1"/>
</dbReference>
<dbReference type="FunFam" id="1.20.120.1080:FF:000001">
    <property type="entry name" value="Pre-mRNA-splicing factor ATP-dependent RNA helicase"/>
    <property type="match status" value="1"/>
</dbReference>
<dbReference type="FunFam" id="3.40.50.300:FF:000101">
    <property type="entry name" value="Pre-mRNA-splicing factor ATP-dependent RNA helicase"/>
    <property type="match status" value="1"/>
</dbReference>
<dbReference type="FunFam" id="3.40.50.300:FF:000191">
    <property type="entry name" value="Pre-mRNA-splicing factor ATP-dependent RNA helicase"/>
    <property type="match status" value="1"/>
</dbReference>
<dbReference type="Gene3D" id="1.20.120.1080">
    <property type="match status" value="1"/>
</dbReference>
<dbReference type="Gene3D" id="2.40.50.140">
    <property type="entry name" value="Nucleic acid-binding proteins"/>
    <property type="match status" value="1"/>
</dbReference>
<dbReference type="Gene3D" id="3.40.50.300">
    <property type="entry name" value="P-loop containing nucleotide triphosphate hydrolases"/>
    <property type="match status" value="2"/>
</dbReference>
<dbReference type="InterPro" id="IPR011709">
    <property type="entry name" value="DEAD-box_helicase_OB_fold"/>
</dbReference>
<dbReference type="InterPro" id="IPR011545">
    <property type="entry name" value="DEAD/DEAH_box_helicase_dom"/>
</dbReference>
<dbReference type="InterPro" id="IPR044762">
    <property type="entry name" value="DHX8/Prp22_DEXHc"/>
</dbReference>
<dbReference type="InterPro" id="IPR002464">
    <property type="entry name" value="DNA/RNA_helicase_DEAH_CS"/>
</dbReference>
<dbReference type="InterPro" id="IPR048333">
    <property type="entry name" value="HA2_WH"/>
</dbReference>
<dbReference type="InterPro" id="IPR007502">
    <property type="entry name" value="Helicase-assoc_dom"/>
</dbReference>
<dbReference type="InterPro" id="IPR014001">
    <property type="entry name" value="Helicase_ATP-bd"/>
</dbReference>
<dbReference type="InterPro" id="IPR001650">
    <property type="entry name" value="Helicase_C-like"/>
</dbReference>
<dbReference type="InterPro" id="IPR012340">
    <property type="entry name" value="NA-bd_OB-fold"/>
</dbReference>
<dbReference type="InterPro" id="IPR027417">
    <property type="entry name" value="P-loop_NTPase"/>
</dbReference>
<dbReference type="InterPro" id="IPR049621">
    <property type="entry name" value="S1_DHX8_helicase"/>
</dbReference>
<dbReference type="InterPro" id="IPR003029">
    <property type="entry name" value="S1_domain"/>
</dbReference>
<dbReference type="PANTHER" id="PTHR18934">
    <property type="entry name" value="ATP-DEPENDENT RNA HELICASE"/>
    <property type="match status" value="1"/>
</dbReference>
<dbReference type="PANTHER" id="PTHR18934:SF85">
    <property type="entry name" value="ATP-DEPENDENT RNA HELICASE DHX8"/>
    <property type="match status" value="1"/>
</dbReference>
<dbReference type="Pfam" id="PF00270">
    <property type="entry name" value="DEAD"/>
    <property type="match status" value="1"/>
</dbReference>
<dbReference type="Pfam" id="PF21010">
    <property type="entry name" value="HA2_C"/>
    <property type="match status" value="1"/>
</dbReference>
<dbReference type="Pfam" id="PF04408">
    <property type="entry name" value="HA2_N"/>
    <property type="match status" value="1"/>
</dbReference>
<dbReference type="Pfam" id="PF00271">
    <property type="entry name" value="Helicase_C"/>
    <property type="match status" value="1"/>
</dbReference>
<dbReference type="Pfam" id="PF07717">
    <property type="entry name" value="OB_NTP_bind"/>
    <property type="match status" value="1"/>
</dbReference>
<dbReference type="Pfam" id="PF00575">
    <property type="entry name" value="S1"/>
    <property type="match status" value="1"/>
</dbReference>
<dbReference type="SMART" id="SM00487">
    <property type="entry name" value="DEXDc"/>
    <property type="match status" value="1"/>
</dbReference>
<dbReference type="SMART" id="SM00847">
    <property type="entry name" value="HA2"/>
    <property type="match status" value="1"/>
</dbReference>
<dbReference type="SMART" id="SM00490">
    <property type="entry name" value="HELICc"/>
    <property type="match status" value="1"/>
</dbReference>
<dbReference type="SMART" id="SM00316">
    <property type="entry name" value="S1"/>
    <property type="match status" value="1"/>
</dbReference>
<dbReference type="SUPFAM" id="SSF50249">
    <property type="entry name" value="Nucleic acid-binding proteins"/>
    <property type="match status" value="1"/>
</dbReference>
<dbReference type="SUPFAM" id="SSF52540">
    <property type="entry name" value="P-loop containing nucleoside triphosphate hydrolases"/>
    <property type="match status" value="1"/>
</dbReference>
<dbReference type="PROSITE" id="PS00690">
    <property type="entry name" value="DEAH_ATP_HELICASE"/>
    <property type="match status" value="1"/>
</dbReference>
<dbReference type="PROSITE" id="PS51192">
    <property type="entry name" value="HELICASE_ATP_BIND_1"/>
    <property type="match status" value="1"/>
</dbReference>
<dbReference type="PROSITE" id="PS51194">
    <property type="entry name" value="HELICASE_CTER"/>
    <property type="match status" value="1"/>
</dbReference>
<dbReference type="PROSITE" id="PS50126">
    <property type="entry name" value="S1"/>
    <property type="match status" value="1"/>
</dbReference>
<reference key="1">
    <citation type="journal article" date="2005" name="Nature">
        <title>The genome of the social amoeba Dictyostelium discoideum.</title>
        <authorList>
            <person name="Eichinger L."/>
            <person name="Pachebat J.A."/>
            <person name="Gloeckner G."/>
            <person name="Rajandream M.A."/>
            <person name="Sucgang R."/>
            <person name="Berriman M."/>
            <person name="Song J."/>
            <person name="Olsen R."/>
            <person name="Szafranski K."/>
            <person name="Xu Q."/>
            <person name="Tunggal B."/>
            <person name="Kummerfeld S."/>
            <person name="Madera M."/>
            <person name="Konfortov B.A."/>
            <person name="Rivero F."/>
            <person name="Bankier A.T."/>
            <person name="Lehmann R."/>
            <person name="Hamlin N."/>
            <person name="Davies R."/>
            <person name="Gaudet P."/>
            <person name="Fey P."/>
            <person name="Pilcher K."/>
            <person name="Chen G."/>
            <person name="Saunders D."/>
            <person name="Sodergren E.J."/>
            <person name="Davis P."/>
            <person name="Kerhornou A."/>
            <person name="Nie X."/>
            <person name="Hall N."/>
            <person name="Anjard C."/>
            <person name="Hemphill L."/>
            <person name="Bason N."/>
            <person name="Farbrother P."/>
            <person name="Desany B."/>
            <person name="Just E."/>
            <person name="Morio T."/>
            <person name="Rost R."/>
            <person name="Churcher C.M."/>
            <person name="Cooper J."/>
            <person name="Haydock S."/>
            <person name="van Driessche N."/>
            <person name="Cronin A."/>
            <person name="Goodhead I."/>
            <person name="Muzny D.M."/>
            <person name="Mourier T."/>
            <person name="Pain A."/>
            <person name="Lu M."/>
            <person name="Harper D."/>
            <person name="Lindsay R."/>
            <person name="Hauser H."/>
            <person name="James K.D."/>
            <person name="Quiles M."/>
            <person name="Madan Babu M."/>
            <person name="Saito T."/>
            <person name="Buchrieser C."/>
            <person name="Wardroper A."/>
            <person name="Felder M."/>
            <person name="Thangavelu M."/>
            <person name="Johnson D."/>
            <person name="Knights A."/>
            <person name="Loulseged H."/>
            <person name="Mungall K.L."/>
            <person name="Oliver K."/>
            <person name="Price C."/>
            <person name="Quail M.A."/>
            <person name="Urushihara H."/>
            <person name="Hernandez J."/>
            <person name="Rabbinowitsch E."/>
            <person name="Steffen D."/>
            <person name="Sanders M."/>
            <person name="Ma J."/>
            <person name="Kohara Y."/>
            <person name="Sharp S."/>
            <person name="Simmonds M.N."/>
            <person name="Spiegler S."/>
            <person name="Tivey A."/>
            <person name="Sugano S."/>
            <person name="White B."/>
            <person name="Walker D."/>
            <person name="Woodward J.R."/>
            <person name="Winckler T."/>
            <person name="Tanaka Y."/>
            <person name="Shaulsky G."/>
            <person name="Schleicher M."/>
            <person name="Weinstock G.M."/>
            <person name="Rosenthal A."/>
            <person name="Cox E.C."/>
            <person name="Chisholm R.L."/>
            <person name="Gibbs R.A."/>
            <person name="Loomis W.F."/>
            <person name="Platzer M."/>
            <person name="Kay R.R."/>
            <person name="Williams J.G."/>
            <person name="Dear P.H."/>
            <person name="Noegel A.A."/>
            <person name="Barrell B.G."/>
            <person name="Kuspa A."/>
        </authorList>
    </citation>
    <scope>NUCLEOTIDE SEQUENCE [LARGE SCALE GENOMIC DNA]</scope>
    <source>
        <strain>AX4</strain>
    </source>
</reference>
<proteinExistence type="inferred from homology"/>
<sequence length="1160" mass="131707">MDKLERIELESQVCNELERFIGSGDKLLAEFVIGLADENPKLKDFNKAISENVPDFPESLSSHLFNLIEKMKKKTTTTTNNNNNNNNNNTNTAKTTTTTTTTTTTTNNNNYKESEWEETKLNSNSNNQKKNQFPGLSIPNKVEWDQGKIVDVPIDDEKTKEELKRKQQDMDREFEREQREKRDRDREQQNKRREIDKEPILYKIYDGKVSSINDYGCFVTLEGIAGRRDGLVHISQILSGRTKLNHPSDVVKRNQQVKVKILSVASSKISLSMKDVDQSTGRDLNPQQNIQSIISTNSTNNRSNPFKPNNNNNNSSNNNNNDDDDKYTTSKNRKRIASPDRWGYKQLIASGILSVPEMPNYDKEVGLVNHDEEQPEEDFDIERNEDEPQFLKGTRMNMQQLSPIKIVKKPNGSLQRAASTQTALSKERKEEKNQQRNEMMDSIPKDLSLPWHDPMPEAGERHLAQEIRSIAGQGIDTEIPEWKKVTQGSHIQYGKATSRSIKEQRESLPIFPLREAFLQAVSEHQLLVVIGETGSGKTTQMAQYLAEAGYGTRGKIGCTQPRRVAAMSVSKRVAEEFGCQLGQEVGYAIRFEDCTSPETIIKFMTDGILLRECLLDPNLSAYSVIILDEAHERTISTDVLFGLLKQALQRRPELKVLITSATLEAEKFSKYFMNAQLFIIPGRTFPVDIRYTKDPEADYLDASLITVMQIHLSEPPGDILLFLTGQEEIDAACQILYERMKSLGSNVPDLIILPVYSALPSEMQTKIFEPAPPGSRKVVIATNIAETSLTIDGIYYVIDPGFSKQKCFNPKNGMDSLVVAPISQAAARQRSGRAGRTGPGKCYRLYTESAFKNEMLASSIPEIQRTNLGNTVLTMKAMGINDLLNFDFMDPPPVQTLVSAMEQLYSLGALDEEGLLTRLGRKMAEFPLDPQLSKMLIASVDLGCSDEILTVVAMLSVQNVFYRPKEKQALADQKKAKFFQPEGDHLTLLNVYESWKNSKFSNPWCFENFVQARSLRRAQDVRKQLITIMDRYKLDIISAGRNYTKIQKAICSGFFANASKKDPNEGYKTLVEGQPVYIHPSSTLFNRNPDWVIYHELVMTTKEYMREVCTIDPKWLVELAPKFFKTSDPNKISKRKRKEKIEPLYDKYNDPNAWRPSKRK</sequence>
<feature type="chain" id="PRO_0000330832" description="ATP-dependent RNA helicase dhx8">
    <location>
        <begin position="1"/>
        <end position="1160"/>
    </location>
</feature>
<feature type="domain" description="S1 motif" evidence="2">
    <location>
        <begin position="202"/>
        <end position="274"/>
    </location>
</feature>
<feature type="domain" description="Helicase ATP-binding" evidence="3">
    <location>
        <begin position="518"/>
        <end position="681"/>
    </location>
</feature>
<feature type="domain" description="Helicase C-terminal" evidence="4">
    <location>
        <begin position="699"/>
        <end position="879"/>
    </location>
</feature>
<feature type="region of interest" description="Disordered" evidence="5">
    <location>
        <begin position="75"/>
        <end position="140"/>
    </location>
</feature>
<feature type="region of interest" description="Disordered" evidence="5">
    <location>
        <begin position="153"/>
        <end position="192"/>
    </location>
</feature>
<feature type="region of interest" description="Disordered" evidence="5">
    <location>
        <begin position="294"/>
        <end position="334"/>
    </location>
</feature>
<feature type="region of interest" description="Disordered" evidence="5">
    <location>
        <begin position="409"/>
        <end position="438"/>
    </location>
</feature>
<feature type="short sequence motif" description="DEAH box">
    <location>
        <begin position="628"/>
        <end position="631"/>
    </location>
</feature>
<feature type="compositionally biased region" description="Low complexity" evidence="5">
    <location>
        <begin position="76"/>
        <end position="110"/>
    </location>
</feature>
<feature type="compositionally biased region" description="Low complexity" evidence="5">
    <location>
        <begin position="122"/>
        <end position="132"/>
    </location>
</feature>
<feature type="compositionally biased region" description="Basic and acidic residues" evidence="5">
    <location>
        <begin position="155"/>
        <end position="192"/>
    </location>
</feature>
<feature type="compositionally biased region" description="Low complexity" evidence="5">
    <location>
        <begin position="294"/>
        <end position="320"/>
    </location>
</feature>
<feature type="compositionally biased region" description="Polar residues" evidence="5">
    <location>
        <begin position="412"/>
        <end position="424"/>
    </location>
</feature>
<feature type="compositionally biased region" description="Basic and acidic residues" evidence="5">
    <location>
        <begin position="425"/>
        <end position="438"/>
    </location>
</feature>
<feature type="binding site" evidence="3">
    <location>
        <begin position="531"/>
        <end position="538"/>
    </location>
    <ligand>
        <name>ATP</name>
        <dbReference type="ChEBI" id="CHEBI:30616"/>
    </ligand>
</feature>
<evidence type="ECO:0000250" key="1"/>
<evidence type="ECO:0000255" key="2">
    <source>
        <dbReference type="PROSITE-ProRule" id="PRU00180"/>
    </source>
</evidence>
<evidence type="ECO:0000255" key="3">
    <source>
        <dbReference type="PROSITE-ProRule" id="PRU00541"/>
    </source>
</evidence>
<evidence type="ECO:0000255" key="4">
    <source>
        <dbReference type="PROSITE-ProRule" id="PRU00542"/>
    </source>
</evidence>
<evidence type="ECO:0000256" key="5">
    <source>
        <dbReference type="SAM" id="MobiDB-lite"/>
    </source>
</evidence>
<evidence type="ECO:0000305" key="6"/>